<sequence>MKNINPSQTSAWKALEQHFAQIKDIHLRELFEQDPDRFAKFSATFDDQILVDFSKNRITTETLKKLQALAKETDVAGAMRSLFSGEKINCTENRAVLHIALRNRSNTPMMVDGEDVMQQVNAVLAKMKDFSERVIHGEWKGYTGKGITDVVNIGIGGSDLGPYMVTEALKPYKNHLNMHFVSNVDGTHIAETLKALNPETTLFLIASKTFTTQETMTNAHSARDWFLKSAGDEGHIAKHFAALSTNGQEVKQFGIDTKNMFEFWDWVGGRYSLWSAIGLSIALSIGFENFEQLLSGAHAMDQHVANTPFEQNIPVLLALIGIWYNNFFGAETEAILPYDQYMHRFAAYFQQGNMESNGKYIDRNGHPVDYQTGPIIWGEPGTNGQHAFYQLIHQGTKLIPCDFIAPAISHNPLSDHHSKLLSNFFAQTEALAFGKSREQVDAEFATSGKTVVEVEHVAPFKVFEGNRPTNSILLREITPFSLGALIAMYEHKIFVQGAILNIFTFDQWGVELGKQLANRILPELKDDNRVVSHDSSTNGLINRFKAWR</sequence>
<protein>
    <recommendedName>
        <fullName evidence="1">Glucose-6-phosphate isomerase</fullName>
        <shortName evidence="1">GPI</shortName>
        <ecNumber evidence="1">5.3.1.9</ecNumber>
    </recommendedName>
    <alternativeName>
        <fullName evidence="1">Phosphoglucose isomerase</fullName>
        <shortName evidence="1">PGI</shortName>
    </alternativeName>
    <alternativeName>
        <fullName evidence="1">Phosphohexose isomerase</fullName>
        <shortName evidence="1">PHI</shortName>
    </alternativeName>
</protein>
<accession>Q7MZB4</accession>
<proteinExistence type="inferred from homology"/>
<reference key="1">
    <citation type="journal article" date="2003" name="Nat. Biotechnol.">
        <title>The genome sequence of the entomopathogenic bacterium Photorhabdus luminescens.</title>
        <authorList>
            <person name="Duchaud E."/>
            <person name="Rusniok C."/>
            <person name="Frangeul L."/>
            <person name="Buchrieser C."/>
            <person name="Givaudan A."/>
            <person name="Taourit S."/>
            <person name="Bocs S."/>
            <person name="Boursaux-Eude C."/>
            <person name="Chandler M."/>
            <person name="Charles J.-F."/>
            <person name="Dassa E."/>
            <person name="Derose R."/>
            <person name="Derzelle S."/>
            <person name="Freyssinet G."/>
            <person name="Gaudriault S."/>
            <person name="Medigue C."/>
            <person name="Lanois A."/>
            <person name="Powell K."/>
            <person name="Siguier P."/>
            <person name="Vincent R."/>
            <person name="Wingate V."/>
            <person name="Zouine M."/>
            <person name="Glaser P."/>
            <person name="Boemare N."/>
            <person name="Danchin A."/>
            <person name="Kunst F."/>
        </authorList>
    </citation>
    <scope>NUCLEOTIDE SEQUENCE [LARGE SCALE GENOMIC DNA]</scope>
    <source>
        <strain>DSM 15139 / CIP 105565 / TT01</strain>
    </source>
</reference>
<keyword id="KW-0963">Cytoplasm</keyword>
<keyword id="KW-0312">Gluconeogenesis</keyword>
<keyword id="KW-0324">Glycolysis</keyword>
<keyword id="KW-0413">Isomerase</keyword>
<keyword id="KW-1185">Reference proteome</keyword>
<organism>
    <name type="scientific">Photorhabdus laumondii subsp. laumondii (strain DSM 15139 / CIP 105565 / TT01)</name>
    <name type="common">Photorhabdus luminescens subsp. laumondii</name>
    <dbReference type="NCBI Taxonomy" id="243265"/>
    <lineage>
        <taxon>Bacteria</taxon>
        <taxon>Pseudomonadati</taxon>
        <taxon>Pseudomonadota</taxon>
        <taxon>Gammaproteobacteria</taxon>
        <taxon>Enterobacterales</taxon>
        <taxon>Morganellaceae</taxon>
        <taxon>Photorhabdus</taxon>
    </lineage>
</organism>
<dbReference type="EC" id="5.3.1.9" evidence="1"/>
<dbReference type="EMBL" id="BX571873">
    <property type="protein sequence ID" value="CAE16751.1"/>
    <property type="molecule type" value="Genomic_DNA"/>
</dbReference>
<dbReference type="RefSeq" id="WP_011148469.1">
    <property type="nucleotide sequence ID" value="NC_005126.1"/>
</dbReference>
<dbReference type="SMR" id="Q7MZB4"/>
<dbReference type="STRING" id="243265.plu4379"/>
<dbReference type="GeneID" id="48850589"/>
<dbReference type="KEGG" id="plu:plu4379"/>
<dbReference type="eggNOG" id="COG0166">
    <property type="taxonomic scope" value="Bacteria"/>
</dbReference>
<dbReference type="HOGENOM" id="CLU_017947_3_1_6"/>
<dbReference type="OrthoDB" id="140919at2"/>
<dbReference type="UniPathway" id="UPA00109">
    <property type="reaction ID" value="UER00181"/>
</dbReference>
<dbReference type="UniPathway" id="UPA00138"/>
<dbReference type="Proteomes" id="UP000002514">
    <property type="component" value="Chromosome"/>
</dbReference>
<dbReference type="GO" id="GO:0005829">
    <property type="term" value="C:cytosol"/>
    <property type="evidence" value="ECO:0007669"/>
    <property type="project" value="TreeGrafter"/>
</dbReference>
<dbReference type="GO" id="GO:0097367">
    <property type="term" value="F:carbohydrate derivative binding"/>
    <property type="evidence" value="ECO:0007669"/>
    <property type="project" value="InterPro"/>
</dbReference>
<dbReference type="GO" id="GO:0004347">
    <property type="term" value="F:glucose-6-phosphate isomerase activity"/>
    <property type="evidence" value="ECO:0007669"/>
    <property type="project" value="UniProtKB-UniRule"/>
</dbReference>
<dbReference type="GO" id="GO:0048029">
    <property type="term" value="F:monosaccharide binding"/>
    <property type="evidence" value="ECO:0007669"/>
    <property type="project" value="TreeGrafter"/>
</dbReference>
<dbReference type="GO" id="GO:0006094">
    <property type="term" value="P:gluconeogenesis"/>
    <property type="evidence" value="ECO:0007669"/>
    <property type="project" value="UniProtKB-UniRule"/>
</dbReference>
<dbReference type="GO" id="GO:0051156">
    <property type="term" value="P:glucose 6-phosphate metabolic process"/>
    <property type="evidence" value="ECO:0007669"/>
    <property type="project" value="TreeGrafter"/>
</dbReference>
<dbReference type="GO" id="GO:0006096">
    <property type="term" value="P:glycolytic process"/>
    <property type="evidence" value="ECO:0007669"/>
    <property type="project" value="UniProtKB-UniRule"/>
</dbReference>
<dbReference type="CDD" id="cd05015">
    <property type="entry name" value="SIS_PGI_1"/>
    <property type="match status" value="1"/>
</dbReference>
<dbReference type="CDD" id="cd05016">
    <property type="entry name" value="SIS_PGI_2"/>
    <property type="match status" value="1"/>
</dbReference>
<dbReference type="FunFam" id="1.10.1390.10:FF:000001">
    <property type="entry name" value="Glucose-6-phosphate isomerase"/>
    <property type="match status" value="1"/>
</dbReference>
<dbReference type="FunFam" id="3.40.50.10490:FF:000004">
    <property type="entry name" value="Glucose-6-phosphate isomerase"/>
    <property type="match status" value="1"/>
</dbReference>
<dbReference type="Gene3D" id="1.10.1390.10">
    <property type="match status" value="1"/>
</dbReference>
<dbReference type="Gene3D" id="3.40.50.10490">
    <property type="entry name" value="Glucose-6-phosphate isomerase like protein, domain 1"/>
    <property type="match status" value="2"/>
</dbReference>
<dbReference type="HAMAP" id="MF_00473">
    <property type="entry name" value="G6P_isomerase"/>
    <property type="match status" value="1"/>
</dbReference>
<dbReference type="InterPro" id="IPR001672">
    <property type="entry name" value="G6P_Isomerase"/>
</dbReference>
<dbReference type="InterPro" id="IPR023096">
    <property type="entry name" value="G6P_Isomerase_C"/>
</dbReference>
<dbReference type="InterPro" id="IPR018189">
    <property type="entry name" value="Phosphoglucose_isomerase_CS"/>
</dbReference>
<dbReference type="InterPro" id="IPR046348">
    <property type="entry name" value="SIS_dom_sf"/>
</dbReference>
<dbReference type="InterPro" id="IPR035476">
    <property type="entry name" value="SIS_PGI_1"/>
</dbReference>
<dbReference type="InterPro" id="IPR035482">
    <property type="entry name" value="SIS_PGI_2"/>
</dbReference>
<dbReference type="NCBIfam" id="NF001211">
    <property type="entry name" value="PRK00179.1"/>
    <property type="match status" value="1"/>
</dbReference>
<dbReference type="PANTHER" id="PTHR11469">
    <property type="entry name" value="GLUCOSE-6-PHOSPHATE ISOMERASE"/>
    <property type="match status" value="1"/>
</dbReference>
<dbReference type="PANTHER" id="PTHR11469:SF1">
    <property type="entry name" value="GLUCOSE-6-PHOSPHATE ISOMERASE"/>
    <property type="match status" value="1"/>
</dbReference>
<dbReference type="Pfam" id="PF00342">
    <property type="entry name" value="PGI"/>
    <property type="match status" value="1"/>
</dbReference>
<dbReference type="PRINTS" id="PR00662">
    <property type="entry name" value="G6PISOMERASE"/>
</dbReference>
<dbReference type="SUPFAM" id="SSF53697">
    <property type="entry name" value="SIS domain"/>
    <property type="match status" value="1"/>
</dbReference>
<dbReference type="PROSITE" id="PS00765">
    <property type="entry name" value="P_GLUCOSE_ISOMERASE_1"/>
    <property type="match status" value="1"/>
</dbReference>
<dbReference type="PROSITE" id="PS00174">
    <property type="entry name" value="P_GLUCOSE_ISOMERASE_2"/>
    <property type="match status" value="1"/>
</dbReference>
<dbReference type="PROSITE" id="PS51463">
    <property type="entry name" value="P_GLUCOSE_ISOMERASE_3"/>
    <property type="match status" value="1"/>
</dbReference>
<evidence type="ECO:0000255" key="1">
    <source>
        <dbReference type="HAMAP-Rule" id="MF_00473"/>
    </source>
</evidence>
<comment type="function">
    <text evidence="1">Catalyzes the reversible isomerization of glucose-6-phosphate to fructose-6-phosphate.</text>
</comment>
<comment type="catalytic activity">
    <reaction evidence="1">
        <text>alpha-D-glucose 6-phosphate = beta-D-fructose 6-phosphate</text>
        <dbReference type="Rhea" id="RHEA:11816"/>
        <dbReference type="ChEBI" id="CHEBI:57634"/>
        <dbReference type="ChEBI" id="CHEBI:58225"/>
        <dbReference type="EC" id="5.3.1.9"/>
    </reaction>
</comment>
<comment type="pathway">
    <text evidence="1">Carbohydrate biosynthesis; gluconeogenesis.</text>
</comment>
<comment type="pathway">
    <text evidence="1">Carbohydrate degradation; glycolysis; D-glyceraldehyde 3-phosphate and glycerone phosphate from D-glucose: step 2/4.</text>
</comment>
<comment type="subcellular location">
    <subcellularLocation>
        <location evidence="1">Cytoplasm</location>
    </subcellularLocation>
</comment>
<comment type="similarity">
    <text evidence="1">Belongs to the GPI family.</text>
</comment>
<gene>
    <name evidence="1" type="primary">pgi</name>
    <name type="ordered locus">plu4379</name>
</gene>
<feature type="chain" id="PRO_0000180702" description="Glucose-6-phosphate isomerase">
    <location>
        <begin position="1"/>
        <end position="548"/>
    </location>
</feature>
<feature type="active site" description="Proton donor" evidence="1">
    <location>
        <position position="355"/>
    </location>
</feature>
<feature type="active site" evidence="1">
    <location>
        <position position="386"/>
    </location>
</feature>
<feature type="active site" evidence="1">
    <location>
        <position position="514"/>
    </location>
</feature>
<name>G6PI_PHOLL</name>